<keyword id="KW-0028">Amino-acid biosynthesis</keyword>
<keyword id="KW-0963">Cytoplasm</keyword>
<keyword id="KW-0238">DNA-binding</keyword>
<keyword id="KW-0486">Methionine biosynthesis</keyword>
<keyword id="KW-1185">Reference proteome</keyword>
<keyword id="KW-0678">Repressor</keyword>
<keyword id="KW-0804">Transcription</keyword>
<keyword id="KW-0805">Transcription regulation</keyword>
<organism>
    <name type="scientific">Citrobacter koseri (strain ATCC BAA-895 / CDC 4225-83 / SGSC4696)</name>
    <dbReference type="NCBI Taxonomy" id="290338"/>
    <lineage>
        <taxon>Bacteria</taxon>
        <taxon>Pseudomonadati</taxon>
        <taxon>Pseudomonadota</taxon>
        <taxon>Gammaproteobacteria</taxon>
        <taxon>Enterobacterales</taxon>
        <taxon>Enterobacteriaceae</taxon>
        <taxon>Citrobacter</taxon>
    </lineage>
</organism>
<name>METJ_CITK8</name>
<accession>A8AKY5</accession>
<feature type="chain" id="PRO_1000046486" description="Met repressor">
    <location>
        <begin position="1"/>
        <end position="105"/>
    </location>
</feature>
<comment type="function">
    <text evidence="1">This regulatory protein, when combined with SAM (S-adenosylmethionine) represses the expression of the methionine regulon and of enzymes involved in SAM synthesis.</text>
</comment>
<comment type="subunit">
    <text evidence="1">Homodimer.</text>
</comment>
<comment type="subcellular location">
    <subcellularLocation>
        <location evidence="1">Cytoplasm</location>
    </subcellularLocation>
</comment>
<comment type="domain">
    <text>Does not bind DNA by a helix-turn-helix motif.</text>
</comment>
<comment type="similarity">
    <text evidence="1">Belongs to the MetJ family.</text>
</comment>
<evidence type="ECO:0000255" key="1">
    <source>
        <dbReference type="HAMAP-Rule" id="MF_00744"/>
    </source>
</evidence>
<proteinExistence type="inferred from homology"/>
<dbReference type="EMBL" id="CP000822">
    <property type="protein sequence ID" value="ABV14148.1"/>
    <property type="molecule type" value="Genomic_DNA"/>
</dbReference>
<dbReference type="RefSeq" id="WP_012133855.1">
    <property type="nucleotide sequence ID" value="NC_009792.1"/>
</dbReference>
<dbReference type="SMR" id="A8AKY5"/>
<dbReference type="STRING" id="290338.CKO_03057"/>
<dbReference type="GeneID" id="88814124"/>
<dbReference type="KEGG" id="cko:CKO_03057"/>
<dbReference type="HOGENOM" id="CLU_142318_0_0_6"/>
<dbReference type="OrthoDB" id="5680896at2"/>
<dbReference type="Proteomes" id="UP000008148">
    <property type="component" value="Chromosome"/>
</dbReference>
<dbReference type="GO" id="GO:0005737">
    <property type="term" value="C:cytoplasm"/>
    <property type="evidence" value="ECO:0007669"/>
    <property type="project" value="UniProtKB-SubCell"/>
</dbReference>
<dbReference type="GO" id="GO:0003677">
    <property type="term" value="F:DNA binding"/>
    <property type="evidence" value="ECO:0007669"/>
    <property type="project" value="UniProtKB-KW"/>
</dbReference>
<dbReference type="GO" id="GO:0003700">
    <property type="term" value="F:DNA-binding transcription factor activity"/>
    <property type="evidence" value="ECO:0007669"/>
    <property type="project" value="InterPro"/>
</dbReference>
<dbReference type="GO" id="GO:0009086">
    <property type="term" value="P:methionine biosynthetic process"/>
    <property type="evidence" value="ECO:0007669"/>
    <property type="project" value="UniProtKB-UniRule"/>
</dbReference>
<dbReference type="GO" id="GO:0045892">
    <property type="term" value="P:negative regulation of DNA-templated transcription"/>
    <property type="evidence" value="ECO:0007669"/>
    <property type="project" value="UniProtKB-UniRule"/>
</dbReference>
<dbReference type="CDD" id="cd00490">
    <property type="entry name" value="Met_repressor_MetJ"/>
    <property type="match status" value="1"/>
</dbReference>
<dbReference type="FunFam" id="1.10.140.10:FF:000001">
    <property type="entry name" value="Met repressor"/>
    <property type="match status" value="1"/>
</dbReference>
<dbReference type="Gene3D" id="1.10.140.10">
    <property type="entry name" value="MET Apo-Repressor, subunit A"/>
    <property type="match status" value="1"/>
</dbReference>
<dbReference type="HAMAP" id="MF_00744">
    <property type="entry name" value="MetJ"/>
    <property type="match status" value="1"/>
</dbReference>
<dbReference type="InterPro" id="IPR002084">
    <property type="entry name" value="Met_repressor_MetJ"/>
</dbReference>
<dbReference type="InterPro" id="IPR023453">
    <property type="entry name" value="Met_repressor_MetJ_dom_sf"/>
</dbReference>
<dbReference type="InterPro" id="IPR010985">
    <property type="entry name" value="Ribbon_hlx_hlx"/>
</dbReference>
<dbReference type="NCBIfam" id="NF003622">
    <property type="entry name" value="PRK05264.1"/>
    <property type="match status" value="1"/>
</dbReference>
<dbReference type="Pfam" id="PF01340">
    <property type="entry name" value="MetJ"/>
    <property type="match status" value="1"/>
</dbReference>
<dbReference type="SUPFAM" id="SSF47598">
    <property type="entry name" value="Ribbon-helix-helix"/>
    <property type="match status" value="1"/>
</dbReference>
<reference key="1">
    <citation type="submission" date="2007-08" db="EMBL/GenBank/DDBJ databases">
        <authorList>
            <consortium name="The Citrobacter koseri Genome Sequencing Project"/>
            <person name="McClelland M."/>
            <person name="Sanderson E.K."/>
            <person name="Porwollik S."/>
            <person name="Spieth J."/>
            <person name="Clifton W.S."/>
            <person name="Latreille P."/>
            <person name="Courtney L."/>
            <person name="Wang C."/>
            <person name="Pepin K."/>
            <person name="Bhonagiri V."/>
            <person name="Nash W."/>
            <person name="Johnson M."/>
            <person name="Thiruvilangam P."/>
            <person name="Wilson R."/>
        </authorList>
    </citation>
    <scope>NUCLEOTIDE SEQUENCE [LARGE SCALE GENOMIC DNA]</scope>
    <source>
        <strain>ATCC BAA-895 / CDC 4225-83 / SGSC4696</strain>
    </source>
</reference>
<protein>
    <recommendedName>
        <fullName evidence="1">Met repressor</fullName>
    </recommendedName>
    <alternativeName>
        <fullName evidence="1">Met regulon regulatory protein MetJ</fullName>
    </alternativeName>
</protein>
<sequence>MAEWSGEYISPYAEHGKKSEQVKKITVSIPLKVLKILTDERTRRQVNNLRHATNSELLCEAFLHAFTGQPLPNDEDLRKERSDEIPEEAKIIMRELGIDPDTWEY</sequence>
<gene>
    <name evidence="1" type="primary">metJ</name>
    <name type="ordered locus">CKO_03057</name>
</gene>